<dbReference type="EC" id="6.1.1.11" evidence="1"/>
<dbReference type="EMBL" id="AE008922">
    <property type="protein sequence ID" value="AAM40889.1"/>
    <property type="molecule type" value="Genomic_DNA"/>
</dbReference>
<dbReference type="RefSeq" id="NP_636965.1">
    <property type="nucleotide sequence ID" value="NC_003902.1"/>
</dbReference>
<dbReference type="RefSeq" id="WP_011036776.1">
    <property type="nucleotide sequence ID" value="NC_003902.1"/>
</dbReference>
<dbReference type="SMR" id="Q8PA92"/>
<dbReference type="STRING" id="190485.XCC1594"/>
<dbReference type="EnsemblBacteria" id="AAM40889">
    <property type="protein sequence ID" value="AAM40889"/>
    <property type="gene ID" value="XCC1594"/>
</dbReference>
<dbReference type="GeneID" id="58013814"/>
<dbReference type="KEGG" id="xcc:XCC1594"/>
<dbReference type="PATRIC" id="fig|190485.4.peg.1707"/>
<dbReference type="eggNOG" id="COG0172">
    <property type="taxonomic scope" value="Bacteria"/>
</dbReference>
<dbReference type="HOGENOM" id="CLU_023797_1_1_6"/>
<dbReference type="OrthoDB" id="9804647at2"/>
<dbReference type="UniPathway" id="UPA00906">
    <property type="reaction ID" value="UER00895"/>
</dbReference>
<dbReference type="Proteomes" id="UP000001010">
    <property type="component" value="Chromosome"/>
</dbReference>
<dbReference type="GO" id="GO:0005737">
    <property type="term" value="C:cytoplasm"/>
    <property type="evidence" value="ECO:0007669"/>
    <property type="project" value="UniProtKB-SubCell"/>
</dbReference>
<dbReference type="GO" id="GO:0005524">
    <property type="term" value="F:ATP binding"/>
    <property type="evidence" value="ECO:0007669"/>
    <property type="project" value="UniProtKB-UniRule"/>
</dbReference>
<dbReference type="GO" id="GO:0004828">
    <property type="term" value="F:serine-tRNA ligase activity"/>
    <property type="evidence" value="ECO:0007669"/>
    <property type="project" value="UniProtKB-UniRule"/>
</dbReference>
<dbReference type="GO" id="GO:0016260">
    <property type="term" value="P:selenocysteine biosynthetic process"/>
    <property type="evidence" value="ECO:0007669"/>
    <property type="project" value="UniProtKB-UniRule"/>
</dbReference>
<dbReference type="GO" id="GO:0006434">
    <property type="term" value="P:seryl-tRNA aminoacylation"/>
    <property type="evidence" value="ECO:0007669"/>
    <property type="project" value="UniProtKB-UniRule"/>
</dbReference>
<dbReference type="CDD" id="cd00770">
    <property type="entry name" value="SerRS_core"/>
    <property type="match status" value="1"/>
</dbReference>
<dbReference type="Gene3D" id="3.30.930.10">
    <property type="entry name" value="Bira Bifunctional Protein, Domain 2"/>
    <property type="match status" value="1"/>
</dbReference>
<dbReference type="Gene3D" id="1.10.287.40">
    <property type="entry name" value="Serine-tRNA synthetase, tRNA binding domain"/>
    <property type="match status" value="1"/>
</dbReference>
<dbReference type="HAMAP" id="MF_00176">
    <property type="entry name" value="Ser_tRNA_synth_type1"/>
    <property type="match status" value="1"/>
</dbReference>
<dbReference type="InterPro" id="IPR002314">
    <property type="entry name" value="aa-tRNA-synt_IIb"/>
</dbReference>
<dbReference type="InterPro" id="IPR006195">
    <property type="entry name" value="aa-tRNA-synth_II"/>
</dbReference>
<dbReference type="InterPro" id="IPR045864">
    <property type="entry name" value="aa-tRNA-synth_II/BPL/LPL"/>
</dbReference>
<dbReference type="InterPro" id="IPR002317">
    <property type="entry name" value="Ser-tRNA-ligase_type_1"/>
</dbReference>
<dbReference type="InterPro" id="IPR015866">
    <property type="entry name" value="Ser-tRNA-synth_1_N"/>
</dbReference>
<dbReference type="InterPro" id="IPR042103">
    <property type="entry name" value="SerRS_1_N_sf"/>
</dbReference>
<dbReference type="InterPro" id="IPR033729">
    <property type="entry name" value="SerRS_core"/>
</dbReference>
<dbReference type="InterPro" id="IPR010978">
    <property type="entry name" value="tRNA-bd_arm"/>
</dbReference>
<dbReference type="NCBIfam" id="TIGR00414">
    <property type="entry name" value="serS"/>
    <property type="match status" value="1"/>
</dbReference>
<dbReference type="PANTHER" id="PTHR43697:SF1">
    <property type="entry name" value="SERINE--TRNA LIGASE"/>
    <property type="match status" value="1"/>
</dbReference>
<dbReference type="PANTHER" id="PTHR43697">
    <property type="entry name" value="SERYL-TRNA SYNTHETASE"/>
    <property type="match status" value="1"/>
</dbReference>
<dbReference type="Pfam" id="PF02403">
    <property type="entry name" value="Seryl_tRNA_N"/>
    <property type="match status" value="1"/>
</dbReference>
<dbReference type="Pfam" id="PF00587">
    <property type="entry name" value="tRNA-synt_2b"/>
    <property type="match status" value="1"/>
</dbReference>
<dbReference type="PIRSF" id="PIRSF001529">
    <property type="entry name" value="Ser-tRNA-synth_IIa"/>
    <property type="match status" value="1"/>
</dbReference>
<dbReference type="PRINTS" id="PR00981">
    <property type="entry name" value="TRNASYNTHSER"/>
</dbReference>
<dbReference type="SUPFAM" id="SSF55681">
    <property type="entry name" value="Class II aaRS and biotin synthetases"/>
    <property type="match status" value="1"/>
</dbReference>
<dbReference type="SUPFAM" id="SSF46589">
    <property type="entry name" value="tRNA-binding arm"/>
    <property type="match status" value="1"/>
</dbReference>
<dbReference type="PROSITE" id="PS50862">
    <property type="entry name" value="AA_TRNA_LIGASE_II"/>
    <property type="match status" value="1"/>
</dbReference>
<sequence>MLDPALLRQHPADLAERLRSTRGFDLNTAELESLESERKRIQVRTQELQSLRNSKSKAIGQAKAKGEDVAALMAEVAGFGDELKASEDALDVIRAQLEGIALGIPNLPAANVPAGKDESENVEQARWGTPRQFDFAVKDHVELGAPHGWLDGETAAKLSGARFTVLRGPIARLHRALAQFMLDLHVGEHGYEETNVPLLVNADSMRGTGQLPKFEDDLFQTEVGDSKRYLIPTSEVPLTNIVRDAIVDAERLPLRMTAHSMCFRAEAGSGGRDTRGMIRQHQFEKVELVTACSPEDSEAEHQRMTRCAEVVLEKLGLPYRKVLLCTGDMGFSAIKTYDLEVWLPSQATYREISSCSNCGDFQARRMQARWRNPASGKPELLHTLNGSGTAVGRAMIAVMENYQNADGSIDVPDALRPYMGGLERIG</sequence>
<organism>
    <name type="scientific">Xanthomonas campestris pv. campestris (strain ATCC 33913 / DSM 3586 / NCPPB 528 / LMG 568 / P 25)</name>
    <dbReference type="NCBI Taxonomy" id="190485"/>
    <lineage>
        <taxon>Bacteria</taxon>
        <taxon>Pseudomonadati</taxon>
        <taxon>Pseudomonadota</taxon>
        <taxon>Gammaproteobacteria</taxon>
        <taxon>Lysobacterales</taxon>
        <taxon>Lysobacteraceae</taxon>
        <taxon>Xanthomonas</taxon>
    </lineage>
</organism>
<reference key="1">
    <citation type="journal article" date="2002" name="Nature">
        <title>Comparison of the genomes of two Xanthomonas pathogens with differing host specificities.</title>
        <authorList>
            <person name="da Silva A.C.R."/>
            <person name="Ferro J.A."/>
            <person name="Reinach F.C."/>
            <person name="Farah C.S."/>
            <person name="Furlan L.R."/>
            <person name="Quaggio R.B."/>
            <person name="Monteiro-Vitorello C.B."/>
            <person name="Van Sluys M.A."/>
            <person name="Almeida N.F. Jr."/>
            <person name="Alves L.M.C."/>
            <person name="do Amaral A.M."/>
            <person name="Bertolini M.C."/>
            <person name="Camargo L.E.A."/>
            <person name="Camarotte G."/>
            <person name="Cannavan F."/>
            <person name="Cardozo J."/>
            <person name="Chambergo F."/>
            <person name="Ciapina L.P."/>
            <person name="Cicarelli R.M.B."/>
            <person name="Coutinho L.L."/>
            <person name="Cursino-Santos J.R."/>
            <person name="El-Dorry H."/>
            <person name="Faria J.B."/>
            <person name="Ferreira A.J.S."/>
            <person name="Ferreira R.C.C."/>
            <person name="Ferro M.I.T."/>
            <person name="Formighieri E.F."/>
            <person name="Franco M.C."/>
            <person name="Greggio C.C."/>
            <person name="Gruber A."/>
            <person name="Katsuyama A.M."/>
            <person name="Kishi L.T."/>
            <person name="Leite R.P."/>
            <person name="Lemos E.G.M."/>
            <person name="Lemos M.V.F."/>
            <person name="Locali E.C."/>
            <person name="Machado M.A."/>
            <person name="Madeira A.M.B.N."/>
            <person name="Martinez-Rossi N.M."/>
            <person name="Martins E.C."/>
            <person name="Meidanis J."/>
            <person name="Menck C.F.M."/>
            <person name="Miyaki C.Y."/>
            <person name="Moon D.H."/>
            <person name="Moreira L.M."/>
            <person name="Novo M.T.M."/>
            <person name="Okura V.K."/>
            <person name="Oliveira M.C."/>
            <person name="Oliveira V.R."/>
            <person name="Pereira H.A."/>
            <person name="Rossi A."/>
            <person name="Sena J.A.D."/>
            <person name="Silva C."/>
            <person name="de Souza R.F."/>
            <person name="Spinola L.A.F."/>
            <person name="Takita M.A."/>
            <person name="Tamura R.E."/>
            <person name="Teixeira E.C."/>
            <person name="Tezza R.I.D."/>
            <person name="Trindade dos Santos M."/>
            <person name="Truffi D."/>
            <person name="Tsai S.M."/>
            <person name="White F.F."/>
            <person name="Setubal J.C."/>
            <person name="Kitajima J.P."/>
        </authorList>
    </citation>
    <scope>NUCLEOTIDE SEQUENCE [LARGE SCALE GENOMIC DNA]</scope>
    <source>
        <strain>ATCC 33913 / DSM 3586 / NCPPB 528 / LMG 568 / P 25</strain>
    </source>
</reference>
<gene>
    <name evidence="1" type="primary">serS</name>
    <name type="ordered locus">XCC1594</name>
</gene>
<keyword id="KW-0030">Aminoacyl-tRNA synthetase</keyword>
<keyword id="KW-0067">ATP-binding</keyword>
<keyword id="KW-0963">Cytoplasm</keyword>
<keyword id="KW-0436">Ligase</keyword>
<keyword id="KW-0547">Nucleotide-binding</keyword>
<keyword id="KW-0648">Protein biosynthesis</keyword>
<keyword id="KW-1185">Reference proteome</keyword>
<proteinExistence type="inferred from homology"/>
<name>SYS_XANCP</name>
<protein>
    <recommendedName>
        <fullName evidence="1">Serine--tRNA ligase</fullName>
        <ecNumber evidence="1">6.1.1.11</ecNumber>
    </recommendedName>
    <alternativeName>
        <fullName evidence="1">Seryl-tRNA synthetase</fullName>
        <shortName evidence="1">SerRS</shortName>
    </alternativeName>
    <alternativeName>
        <fullName evidence="1">Seryl-tRNA(Ser/Sec) synthetase</fullName>
    </alternativeName>
</protein>
<accession>Q8PA92</accession>
<feature type="chain" id="PRO_0000122163" description="Serine--tRNA ligase">
    <location>
        <begin position="1"/>
        <end position="426"/>
    </location>
</feature>
<feature type="binding site" evidence="1">
    <location>
        <begin position="233"/>
        <end position="235"/>
    </location>
    <ligand>
        <name>L-serine</name>
        <dbReference type="ChEBI" id="CHEBI:33384"/>
    </ligand>
</feature>
<feature type="binding site" evidence="1">
    <location>
        <begin position="264"/>
        <end position="266"/>
    </location>
    <ligand>
        <name>ATP</name>
        <dbReference type="ChEBI" id="CHEBI:30616"/>
    </ligand>
</feature>
<feature type="binding site" evidence="1">
    <location>
        <position position="287"/>
    </location>
    <ligand>
        <name>L-serine</name>
        <dbReference type="ChEBI" id="CHEBI:33384"/>
    </ligand>
</feature>
<feature type="binding site" evidence="1">
    <location>
        <begin position="351"/>
        <end position="354"/>
    </location>
    <ligand>
        <name>ATP</name>
        <dbReference type="ChEBI" id="CHEBI:30616"/>
    </ligand>
</feature>
<feature type="binding site" evidence="1">
    <location>
        <position position="387"/>
    </location>
    <ligand>
        <name>L-serine</name>
        <dbReference type="ChEBI" id="CHEBI:33384"/>
    </ligand>
</feature>
<evidence type="ECO:0000255" key="1">
    <source>
        <dbReference type="HAMAP-Rule" id="MF_00176"/>
    </source>
</evidence>
<comment type="function">
    <text evidence="1">Catalyzes the attachment of serine to tRNA(Ser). Is also able to aminoacylate tRNA(Sec) with serine, to form the misacylated tRNA L-seryl-tRNA(Sec), which will be further converted into selenocysteinyl-tRNA(Sec).</text>
</comment>
<comment type="catalytic activity">
    <reaction evidence="1">
        <text>tRNA(Ser) + L-serine + ATP = L-seryl-tRNA(Ser) + AMP + diphosphate + H(+)</text>
        <dbReference type="Rhea" id="RHEA:12292"/>
        <dbReference type="Rhea" id="RHEA-COMP:9669"/>
        <dbReference type="Rhea" id="RHEA-COMP:9703"/>
        <dbReference type="ChEBI" id="CHEBI:15378"/>
        <dbReference type="ChEBI" id="CHEBI:30616"/>
        <dbReference type="ChEBI" id="CHEBI:33019"/>
        <dbReference type="ChEBI" id="CHEBI:33384"/>
        <dbReference type="ChEBI" id="CHEBI:78442"/>
        <dbReference type="ChEBI" id="CHEBI:78533"/>
        <dbReference type="ChEBI" id="CHEBI:456215"/>
        <dbReference type="EC" id="6.1.1.11"/>
    </reaction>
</comment>
<comment type="catalytic activity">
    <reaction evidence="1">
        <text>tRNA(Sec) + L-serine + ATP = L-seryl-tRNA(Sec) + AMP + diphosphate + H(+)</text>
        <dbReference type="Rhea" id="RHEA:42580"/>
        <dbReference type="Rhea" id="RHEA-COMP:9742"/>
        <dbReference type="Rhea" id="RHEA-COMP:10128"/>
        <dbReference type="ChEBI" id="CHEBI:15378"/>
        <dbReference type="ChEBI" id="CHEBI:30616"/>
        <dbReference type="ChEBI" id="CHEBI:33019"/>
        <dbReference type="ChEBI" id="CHEBI:33384"/>
        <dbReference type="ChEBI" id="CHEBI:78442"/>
        <dbReference type="ChEBI" id="CHEBI:78533"/>
        <dbReference type="ChEBI" id="CHEBI:456215"/>
        <dbReference type="EC" id="6.1.1.11"/>
    </reaction>
</comment>
<comment type="pathway">
    <text evidence="1">Aminoacyl-tRNA biosynthesis; selenocysteinyl-tRNA(Sec) biosynthesis; L-seryl-tRNA(Sec) from L-serine and tRNA(Sec): step 1/1.</text>
</comment>
<comment type="subunit">
    <text evidence="1">Homodimer. The tRNA molecule binds across the dimer.</text>
</comment>
<comment type="subcellular location">
    <subcellularLocation>
        <location evidence="1">Cytoplasm</location>
    </subcellularLocation>
</comment>
<comment type="domain">
    <text evidence="1">Consists of two distinct domains, a catalytic core and a N-terminal extension that is involved in tRNA binding.</text>
</comment>
<comment type="similarity">
    <text evidence="1">Belongs to the class-II aminoacyl-tRNA synthetase family. Type-1 seryl-tRNA synthetase subfamily.</text>
</comment>